<proteinExistence type="inferred from homology"/>
<reference key="1">
    <citation type="submission" date="2005-03" db="EMBL/GenBank/DDBJ databases">
        <title>Brevibacillus brevis strain 47, complete genome.</title>
        <authorList>
            <person name="Hosoyama A."/>
            <person name="Yamada R."/>
            <person name="Hongo Y."/>
            <person name="Terui Y."/>
            <person name="Ankai A."/>
            <person name="Masuyama W."/>
            <person name="Sekiguchi M."/>
            <person name="Takeda T."/>
            <person name="Asano K."/>
            <person name="Ohji S."/>
            <person name="Ichikawa N."/>
            <person name="Narita S."/>
            <person name="Aoki N."/>
            <person name="Miura H."/>
            <person name="Matsushita S."/>
            <person name="Sekigawa T."/>
            <person name="Yamagata H."/>
            <person name="Yoshikawa H."/>
            <person name="Udaka S."/>
            <person name="Tanikawa S."/>
            <person name="Fujita N."/>
        </authorList>
    </citation>
    <scope>NUCLEOTIDE SEQUENCE [LARGE SCALE GENOMIC DNA]</scope>
    <source>
        <strain>47 / JCM 6285 / NBRC 100599</strain>
    </source>
</reference>
<organism>
    <name type="scientific">Brevibacillus brevis (strain 47 / JCM 6285 / NBRC 100599)</name>
    <dbReference type="NCBI Taxonomy" id="358681"/>
    <lineage>
        <taxon>Bacteria</taxon>
        <taxon>Bacillati</taxon>
        <taxon>Bacillota</taxon>
        <taxon>Bacilli</taxon>
        <taxon>Bacillales</taxon>
        <taxon>Paenibacillaceae</taxon>
        <taxon>Brevibacillus</taxon>
    </lineage>
</organism>
<comment type="function">
    <text evidence="1">Catalyzes the reversible transfer of the terminal phosphate group between ATP and AMP. Plays an important role in cellular energy homeostasis and in adenine nucleotide metabolism.</text>
</comment>
<comment type="catalytic activity">
    <reaction evidence="1">
        <text>AMP + ATP = 2 ADP</text>
        <dbReference type="Rhea" id="RHEA:12973"/>
        <dbReference type="ChEBI" id="CHEBI:30616"/>
        <dbReference type="ChEBI" id="CHEBI:456215"/>
        <dbReference type="ChEBI" id="CHEBI:456216"/>
        <dbReference type="EC" id="2.7.4.3"/>
    </reaction>
</comment>
<comment type="pathway">
    <text evidence="1">Purine metabolism; AMP biosynthesis via salvage pathway; AMP from ADP: step 1/1.</text>
</comment>
<comment type="subunit">
    <text evidence="1">Monomer.</text>
</comment>
<comment type="subcellular location">
    <subcellularLocation>
        <location evidence="1">Cytoplasm</location>
    </subcellularLocation>
</comment>
<comment type="domain">
    <text evidence="1">Consists of three domains, a large central CORE domain and two small peripheral domains, NMPbind and LID, which undergo movements during catalysis. The LID domain closes over the site of phosphoryl transfer upon ATP binding. Assembling and dissambling the active center during each catalytic cycle provides an effective means to prevent ATP hydrolysis. Some bacteria have evolved a zinc-coordinating structure that stabilizes the LID domain.</text>
</comment>
<comment type="similarity">
    <text evidence="1">Belongs to the adenylate kinase family.</text>
</comment>
<dbReference type="EC" id="2.7.4.3" evidence="1"/>
<dbReference type="EMBL" id="AP008955">
    <property type="protein sequence ID" value="BAH41219.1"/>
    <property type="molecule type" value="Genomic_DNA"/>
</dbReference>
<dbReference type="RefSeq" id="WP_012683997.1">
    <property type="nucleotide sequence ID" value="NC_012491.1"/>
</dbReference>
<dbReference type="SMR" id="C0ZIK1"/>
<dbReference type="STRING" id="358681.BBR47_02420"/>
<dbReference type="KEGG" id="bbe:BBR47_02420"/>
<dbReference type="eggNOG" id="COG0563">
    <property type="taxonomic scope" value="Bacteria"/>
</dbReference>
<dbReference type="HOGENOM" id="CLU_032354_1_2_9"/>
<dbReference type="UniPathway" id="UPA00588">
    <property type="reaction ID" value="UER00649"/>
</dbReference>
<dbReference type="Proteomes" id="UP000001877">
    <property type="component" value="Chromosome"/>
</dbReference>
<dbReference type="GO" id="GO:0005737">
    <property type="term" value="C:cytoplasm"/>
    <property type="evidence" value="ECO:0007669"/>
    <property type="project" value="UniProtKB-SubCell"/>
</dbReference>
<dbReference type="GO" id="GO:0004017">
    <property type="term" value="F:adenylate kinase activity"/>
    <property type="evidence" value="ECO:0007669"/>
    <property type="project" value="UniProtKB-UniRule"/>
</dbReference>
<dbReference type="GO" id="GO:0005524">
    <property type="term" value="F:ATP binding"/>
    <property type="evidence" value="ECO:0007669"/>
    <property type="project" value="UniProtKB-UniRule"/>
</dbReference>
<dbReference type="GO" id="GO:0008270">
    <property type="term" value="F:zinc ion binding"/>
    <property type="evidence" value="ECO:0007669"/>
    <property type="project" value="UniProtKB-UniRule"/>
</dbReference>
<dbReference type="GO" id="GO:0044209">
    <property type="term" value="P:AMP salvage"/>
    <property type="evidence" value="ECO:0007669"/>
    <property type="project" value="UniProtKB-UniRule"/>
</dbReference>
<dbReference type="CDD" id="cd01428">
    <property type="entry name" value="ADK"/>
    <property type="match status" value="1"/>
</dbReference>
<dbReference type="FunFam" id="3.40.50.300:FF:000106">
    <property type="entry name" value="Adenylate kinase mitochondrial"/>
    <property type="match status" value="1"/>
</dbReference>
<dbReference type="Gene3D" id="3.40.50.300">
    <property type="entry name" value="P-loop containing nucleotide triphosphate hydrolases"/>
    <property type="match status" value="1"/>
</dbReference>
<dbReference type="HAMAP" id="MF_00235">
    <property type="entry name" value="Adenylate_kinase_Adk"/>
    <property type="match status" value="1"/>
</dbReference>
<dbReference type="InterPro" id="IPR006259">
    <property type="entry name" value="Adenyl_kin_sub"/>
</dbReference>
<dbReference type="InterPro" id="IPR000850">
    <property type="entry name" value="Adenylat/UMP-CMP_kin"/>
</dbReference>
<dbReference type="InterPro" id="IPR033690">
    <property type="entry name" value="Adenylat_kinase_CS"/>
</dbReference>
<dbReference type="InterPro" id="IPR007862">
    <property type="entry name" value="Adenylate_kinase_lid-dom"/>
</dbReference>
<dbReference type="InterPro" id="IPR027417">
    <property type="entry name" value="P-loop_NTPase"/>
</dbReference>
<dbReference type="NCBIfam" id="TIGR01351">
    <property type="entry name" value="adk"/>
    <property type="match status" value="1"/>
</dbReference>
<dbReference type="NCBIfam" id="NF001380">
    <property type="entry name" value="PRK00279.1-2"/>
    <property type="match status" value="1"/>
</dbReference>
<dbReference type="NCBIfam" id="NF001381">
    <property type="entry name" value="PRK00279.1-3"/>
    <property type="match status" value="1"/>
</dbReference>
<dbReference type="NCBIfam" id="NF011100">
    <property type="entry name" value="PRK14527.1"/>
    <property type="match status" value="1"/>
</dbReference>
<dbReference type="PANTHER" id="PTHR23359">
    <property type="entry name" value="NUCLEOTIDE KINASE"/>
    <property type="match status" value="1"/>
</dbReference>
<dbReference type="Pfam" id="PF00406">
    <property type="entry name" value="ADK"/>
    <property type="match status" value="1"/>
</dbReference>
<dbReference type="Pfam" id="PF05191">
    <property type="entry name" value="ADK_lid"/>
    <property type="match status" value="1"/>
</dbReference>
<dbReference type="PRINTS" id="PR00094">
    <property type="entry name" value="ADENYLTKNASE"/>
</dbReference>
<dbReference type="SUPFAM" id="SSF52540">
    <property type="entry name" value="P-loop containing nucleoside triphosphate hydrolases"/>
    <property type="match status" value="1"/>
</dbReference>
<dbReference type="PROSITE" id="PS00113">
    <property type="entry name" value="ADENYLATE_KINASE"/>
    <property type="match status" value="1"/>
</dbReference>
<name>KAD_BREBN</name>
<gene>
    <name evidence="1" type="primary">adk</name>
    <name type="ordered locus">BBR47_02420</name>
</gene>
<feature type="chain" id="PRO_1000191126" description="Adenylate kinase">
    <location>
        <begin position="1"/>
        <end position="214"/>
    </location>
</feature>
<feature type="region of interest" description="NMP" evidence="1">
    <location>
        <begin position="30"/>
        <end position="59"/>
    </location>
</feature>
<feature type="region of interest" description="LID" evidence="1">
    <location>
        <begin position="126"/>
        <end position="163"/>
    </location>
</feature>
<feature type="binding site" evidence="1">
    <location>
        <begin position="10"/>
        <end position="15"/>
    </location>
    <ligand>
        <name>ATP</name>
        <dbReference type="ChEBI" id="CHEBI:30616"/>
    </ligand>
</feature>
<feature type="binding site" evidence="1">
    <location>
        <position position="31"/>
    </location>
    <ligand>
        <name>AMP</name>
        <dbReference type="ChEBI" id="CHEBI:456215"/>
    </ligand>
</feature>
<feature type="binding site" evidence="1">
    <location>
        <position position="36"/>
    </location>
    <ligand>
        <name>AMP</name>
        <dbReference type="ChEBI" id="CHEBI:456215"/>
    </ligand>
</feature>
<feature type="binding site" evidence="1">
    <location>
        <begin position="57"/>
        <end position="59"/>
    </location>
    <ligand>
        <name>AMP</name>
        <dbReference type="ChEBI" id="CHEBI:456215"/>
    </ligand>
</feature>
<feature type="binding site" evidence="1">
    <location>
        <begin position="85"/>
        <end position="88"/>
    </location>
    <ligand>
        <name>AMP</name>
        <dbReference type="ChEBI" id="CHEBI:456215"/>
    </ligand>
</feature>
<feature type="binding site" evidence="1">
    <location>
        <position position="92"/>
    </location>
    <ligand>
        <name>AMP</name>
        <dbReference type="ChEBI" id="CHEBI:456215"/>
    </ligand>
</feature>
<feature type="binding site" evidence="1">
    <location>
        <position position="127"/>
    </location>
    <ligand>
        <name>ATP</name>
        <dbReference type="ChEBI" id="CHEBI:30616"/>
    </ligand>
</feature>
<feature type="binding site" evidence="1">
    <location>
        <position position="130"/>
    </location>
    <ligand>
        <name>Zn(2+)</name>
        <dbReference type="ChEBI" id="CHEBI:29105"/>
        <note>structural</note>
    </ligand>
</feature>
<feature type="binding site" evidence="1">
    <location>
        <position position="133"/>
    </location>
    <ligand>
        <name>Zn(2+)</name>
        <dbReference type="ChEBI" id="CHEBI:29105"/>
        <note>structural</note>
    </ligand>
</feature>
<feature type="binding site" evidence="1">
    <location>
        <begin position="136"/>
        <end position="137"/>
    </location>
    <ligand>
        <name>ATP</name>
        <dbReference type="ChEBI" id="CHEBI:30616"/>
    </ligand>
</feature>
<feature type="binding site" evidence="1">
    <location>
        <position position="150"/>
    </location>
    <ligand>
        <name>Zn(2+)</name>
        <dbReference type="ChEBI" id="CHEBI:29105"/>
        <note>structural</note>
    </ligand>
</feature>
<feature type="binding site" evidence="1">
    <location>
        <position position="153"/>
    </location>
    <ligand>
        <name>Zn(2+)</name>
        <dbReference type="ChEBI" id="CHEBI:29105"/>
        <note>structural</note>
    </ligand>
</feature>
<feature type="binding site" evidence="1">
    <location>
        <position position="160"/>
    </location>
    <ligand>
        <name>AMP</name>
        <dbReference type="ChEBI" id="CHEBI:456215"/>
    </ligand>
</feature>
<feature type="binding site" evidence="1">
    <location>
        <position position="171"/>
    </location>
    <ligand>
        <name>AMP</name>
        <dbReference type="ChEBI" id="CHEBI:456215"/>
    </ligand>
</feature>
<feature type="binding site" evidence="1">
    <location>
        <position position="199"/>
    </location>
    <ligand>
        <name>ATP</name>
        <dbReference type="ChEBI" id="CHEBI:30616"/>
    </ligand>
</feature>
<protein>
    <recommendedName>
        <fullName evidence="1">Adenylate kinase</fullName>
        <shortName evidence="1">AK</shortName>
        <ecNumber evidence="1">2.7.4.3</ecNumber>
    </recommendedName>
    <alternativeName>
        <fullName evidence="1">ATP-AMP transphosphorylase</fullName>
    </alternativeName>
    <alternativeName>
        <fullName evidence="1">ATP:AMP phosphotransferase</fullName>
    </alternativeName>
    <alternativeName>
        <fullName evidence="1">Adenylate monophosphate kinase</fullName>
    </alternativeName>
</protein>
<evidence type="ECO:0000255" key="1">
    <source>
        <dbReference type="HAMAP-Rule" id="MF_00235"/>
    </source>
</evidence>
<accession>C0ZIK1</accession>
<keyword id="KW-0067">ATP-binding</keyword>
<keyword id="KW-0963">Cytoplasm</keyword>
<keyword id="KW-0418">Kinase</keyword>
<keyword id="KW-0479">Metal-binding</keyword>
<keyword id="KW-0545">Nucleotide biosynthesis</keyword>
<keyword id="KW-0547">Nucleotide-binding</keyword>
<keyword id="KW-1185">Reference proteome</keyword>
<keyword id="KW-0808">Transferase</keyword>
<keyword id="KW-0862">Zinc</keyword>
<sequence length="214" mass="23864">MNIILMGLPGAGKGTQAERIVKEFDIPHISTGDMFRAAVKNETPLGLEAKSYMDKGHLVPDEVVIGIVRERLSMDDCAKGFLLDGFPRTVPQAEALTATVKELGREIDHVININVQREQLIERLTGRWICPVCGASYHTMFNPPKEAGVCDKDGGKLYQREDDKIEVVTQRLDVNIAQTQPLIDYYSAQELLRDIDGEQDIQVVFAEIKSLLRG</sequence>